<evidence type="ECO:0000255" key="1">
    <source>
        <dbReference type="HAMAP-Rule" id="MF_01315"/>
    </source>
</evidence>
<evidence type="ECO:0000256" key="2">
    <source>
        <dbReference type="SAM" id="MobiDB-lite"/>
    </source>
</evidence>
<evidence type="ECO:0000305" key="3"/>
<organism>
    <name type="scientific">Aquifex aeolicus (strain VF5)</name>
    <dbReference type="NCBI Taxonomy" id="224324"/>
    <lineage>
        <taxon>Bacteria</taxon>
        <taxon>Pseudomonadati</taxon>
        <taxon>Aquificota</taxon>
        <taxon>Aquificia</taxon>
        <taxon>Aquificales</taxon>
        <taxon>Aquificaceae</taxon>
        <taxon>Aquifex</taxon>
    </lineage>
</organism>
<comment type="function">
    <text evidence="1">Located at the top of the head of the 30S subunit, it contacts several helices of the 16S rRNA. In the 70S ribosome it contacts the 23S rRNA (bridge B1a) and protein L5 of the 50S subunit (bridge B1b), connecting the 2 subunits; these bridges are implicated in subunit movement. Contacts the tRNAs in the A and P-sites.</text>
</comment>
<comment type="subunit">
    <text evidence="1">Part of the 30S ribosomal subunit. Forms a loose heterodimer with protein S19. Forms two bridges to the 50S subunit in the 70S ribosome.</text>
</comment>
<comment type="similarity">
    <text evidence="1">Belongs to the universal ribosomal protein uS13 family.</text>
</comment>
<accession>O66486</accession>
<sequence length="126" mass="14340">MARIAGVDLPNNKRLEVALTYIYGIGWSRAREICEKTGIPCTKRVGELTPDELNTLRKFIDENYKVEGDLRREVQLNIKKLKDMGCYRGIRHARGLPVRGQQTRTNARTRKGKRKTVGGTKKAKAK</sequence>
<proteinExistence type="inferred from homology"/>
<dbReference type="EMBL" id="AE000657">
    <property type="protein sequence ID" value="AAC06445.1"/>
    <property type="molecule type" value="Genomic_DNA"/>
</dbReference>
<dbReference type="PIR" id="C70307">
    <property type="entry name" value="C70307"/>
</dbReference>
<dbReference type="RefSeq" id="NP_213046.1">
    <property type="nucleotide sequence ID" value="NC_000918.1"/>
</dbReference>
<dbReference type="RefSeq" id="WP_010879984.1">
    <property type="nucleotide sequence ID" value="NC_000918.1"/>
</dbReference>
<dbReference type="SMR" id="O66486"/>
<dbReference type="FunCoup" id="O66486">
    <property type="interactions" value="476"/>
</dbReference>
<dbReference type="STRING" id="224324.aq_074"/>
<dbReference type="EnsemblBacteria" id="AAC06445">
    <property type="protein sequence ID" value="AAC06445"/>
    <property type="gene ID" value="aq_074"/>
</dbReference>
<dbReference type="KEGG" id="aae:aq_074"/>
<dbReference type="PATRIC" id="fig|224324.8.peg.64"/>
<dbReference type="eggNOG" id="COG0099">
    <property type="taxonomic scope" value="Bacteria"/>
</dbReference>
<dbReference type="HOGENOM" id="CLU_103849_1_2_0"/>
<dbReference type="InParanoid" id="O66486"/>
<dbReference type="OrthoDB" id="9803610at2"/>
<dbReference type="Proteomes" id="UP000000798">
    <property type="component" value="Chromosome"/>
</dbReference>
<dbReference type="GO" id="GO:0005829">
    <property type="term" value="C:cytosol"/>
    <property type="evidence" value="ECO:0000318"/>
    <property type="project" value="GO_Central"/>
</dbReference>
<dbReference type="GO" id="GO:0015935">
    <property type="term" value="C:small ribosomal subunit"/>
    <property type="evidence" value="ECO:0000318"/>
    <property type="project" value="GO_Central"/>
</dbReference>
<dbReference type="GO" id="GO:0019843">
    <property type="term" value="F:rRNA binding"/>
    <property type="evidence" value="ECO:0007669"/>
    <property type="project" value="UniProtKB-UniRule"/>
</dbReference>
<dbReference type="GO" id="GO:0003735">
    <property type="term" value="F:structural constituent of ribosome"/>
    <property type="evidence" value="ECO:0007669"/>
    <property type="project" value="InterPro"/>
</dbReference>
<dbReference type="GO" id="GO:0000049">
    <property type="term" value="F:tRNA binding"/>
    <property type="evidence" value="ECO:0007669"/>
    <property type="project" value="UniProtKB-UniRule"/>
</dbReference>
<dbReference type="GO" id="GO:0006412">
    <property type="term" value="P:translation"/>
    <property type="evidence" value="ECO:0007669"/>
    <property type="project" value="UniProtKB-UniRule"/>
</dbReference>
<dbReference type="FunFam" id="1.10.8.50:FF:000001">
    <property type="entry name" value="30S ribosomal protein S13"/>
    <property type="match status" value="1"/>
</dbReference>
<dbReference type="FunFam" id="4.10.910.10:FF:000001">
    <property type="entry name" value="30S ribosomal protein S13"/>
    <property type="match status" value="1"/>
</dbReference>
<dbReference type="Gene3D" id="1.10.8.50">
    <property type="match status" value="1"/>
</dbReference>
<dbReference type="Gene3D" id="4.10.910.10">
    <property type="entry name" value="30s ribosomal protein s13, domain 2"/>
    <property type="match status" value="1"/>
</dbReference>
<dbReference type="HAMAP" id="MF_01315">
    <property type="entry name" value="Ribosomal_uS13"/>
    <property type="match status" value="1"/>
</dbReference>
<dbReference type="InterPro" id="IPR027437">
    <property type="entry name" value="Rbsml_uS13_C"/>
</dbReference>
<dbReference type="InterPro" id="IPR001892">
    <property type="entry name" value="Ribosomal_uS13"/>
</dbReference>
<dbReference type="InterPro" id="IPR010979">
    <property type="entry name" value="Ribosomal_uS13-like_H2TH"/>
</dbReference>
<dbReference type="InterPro" id="IPR019980">
    <property type="entry name" value="Ribosomal_uS13_bac-type"/>
</dbReference>
<dbReference type="InterPro" id="IPR018269">
    <property type="entry name" value="Ribosomal_uS13_CS"/>
</dbReference>
<dbReference type="NCBIfam" id="TIGR03631">
    <property type="entry name" value="uS13_bact"/>
    <property type="match status" value="1"/>
</dbReference>
<dbReference type="PANTHER" id="PTHR10871">
    <property type="entry name" value="30S RIBOSOMAL PROTEIN S13/40S RIBOSOMAL PROTEIN S18"/>
    <property type="match status" value="1"/>
</dbReference>
<dbReference type="PANTHER" id="PTHR10871:SF1">
    <property type="entry name" value="SMALL RIBOSOMAL SUBUNIT PROTEIN US13M"/>
    <property type="match status" value="1"/>
</dbReference>
<dbReference type="Pfam" id="PF00416">
    <property type="entry name" value="Ribosomal_S13"/>
    <property type="match status" value="1"/>
</dbReference>
<dbReference type="PIRSF" id="PIRSF002134">
    <property type="entry name" value="Ribosomal_S13"/>
    <property type="match status" value="1"/>
</dbReference>
<dbReference type="SUPFAM" id="SSF46946">
    <property type="entry name" value="S13-like H2TH domain"/>
    <property type="match status" value="1"/>
</dbReference>
<dbReference type="PROSITE" id="PS00646">
    <property type="entry name" value="RIBOSOMAL_S13_1"/>
    <property type="match status" value="1"/>
</dbReference>
<dbReference type="PROSITE" id="PS50159">
    <property type="entry name" value="RIBOSOMAL_S13_2"/>
    <property type="match status" value="1"/>
</dbReference>
<reference key="1">
    <citation type="journal article" date="1998" name="Nature">
        <title>The complete genome of the hyperthermophilic bacterium Aquifex aeolicus.</title>
        <authorList>
            <person name="Deckert G."/>
            <person name="Warren P.V."/>
            <person name="Gaasterland T."/>
            <person name="Young W.G."/>
            <person name="Lenox A.L."/>
            <person name="Graham D.E."/>
            <person name="Overbeek R."/>
            <person name="Snead M.A."/>
            <person name="Keller M."/>
            <person name="Aujay M."/>
            <person name="Huber R."/>
            <person name="Feldman R.A."/>
            <person name="Short J.M."/>
            <person name="Olsen G.J."/>
            <person name="Swanson R.V."/>
        </authorList>
    </citation>
    <scope>NUCLEOTIDE SEQUENCE [LARGE SCALE GENOMIC DNA]</scope>
    <source>
        <strain>VF5</strain>
    </source>
</reference>
<keyword id="KW-1185">Reference proteome</keyword>
<keyword id="KW-0687">Ribonucleoprotein</keyword>
<keyword id="KW-0689">Ribosomal protein</keyword>
<keyword id="KW-0694">RNA-binding</keyword>
<keyword id="KW-0699">rRNA-binding</keyword>
<keyword id="KW-0820">tRNA-binding</keyword>
<name>RS13_AQUAE</name>
<protein>
    <recommendedName>
        <fullName evidence="1">Small ribosomal subunit protein uS13</fullName>
    </recommendedName>
    <alternativeName>
        <fullName evidence="3">30S ribosomal protein S13</fullName>
    </alternativeName>
</protein>
<gene>
    <name evidence="1" type="primary">rpsM</name>
    <name type="ordered locus">aq_074</name>
</gene>
<feature type="chain" id="PRO_0000132060" description="Small ribosomal subunit protein uS13">
    <location>
        <begin position="1"/>
        <end position="126"/>
    </location>
</feature>
<feature type="region of interest" description="Disordered" evidence="2">
    <location>
        <begin position="95"/>
        <end position="126"/>
    </location>
</feature>
<feature type="compositionally biased region" description="Basic residues" evidence="2">
    <location>
        <begin position="107"/>
        <end position="126"/>
    </location>
</feature>